<feature type="chain" id="PRO_1000092436" description="Elongation factor 4">
    <location>
        <begin position="1"/>
        <end position="602"/>
    </location>
</feature>
<feature type="domain" description="tr-type G">
    <location>
        <begin position="8"/>
        <end position="190"/>
    </location>
</feature>
<feature type="binding site" evidence="1">
    <location>
        <begin position="20"/>
        <end position="25"/>
    </location>
    <ligand>
        <name>GTP</name>
        <dbReference type="ChEBI" id="CHEBI:37565"/>
    </ligand>
</feature>
<feature type="binding site" evidence="1">
    <location>
        <begin position="137"/>
        <end position="140"/>
    </location>
    <ligand>
        <name>GTP</name>
        <dbReference type="ChEBI" id="CHEBI:37565"/>
    </ligand>
</feature>
<evidence type="ECO:0000255" key="1">
    <source>
        <dbReference type="HAMAP-Rule" id="MF_00071"/>
    </source>
</evidence>
<proteinExistence type="inferred from homology"/>
<organism>
    <name type="scientific">Cereibacter sphaeroides (strain ATCC 17029 / ATH 2.4.9)</name>
    <name type="common">Rhodobacter sphaeroides</name>
    <dbReference type="NCBI Taxonomy" id="349101"/>
    <lineage>
        <taxon>Bacteria</taxon>
        <taxon>Pseudomonadati</taxon>
        <taxon>Pseudomonadota</taxon>
        <taxon>Alphaproteobacteria</taxon>
        <taxon>Rhodobacterales</taxon>
        <taxon>Paracoccaceae</taxon>
        <taxon>Cereibacter</taxon>
    </lineage>
</organism>
<dbReference type="EC" id="3.6.5.n1" evidence="1"/>
<dbReference type="EMBL" id="CP000577">
    <property type="protein sequence ID" value="ABN75875.1"/>
    <property type="molecule type" value="Genomic_DNA"/>
</dbReference>
<dbReference type="SMR" id="A3PHQ9"/>
<dbReference type="KEGG" id="rsh:Rsph17029_0764"/>
<dbReference type="HOGENOM" id="CLU_009995_3_3_5"/>
<dbReference type="GO" id="GO:0005886">
    <property type="term" value="C:plasma membrane"/>
    <property type="evidence" value="ECO:0007669"/>
    <property type="project" value="UniProtKB-SubCell"/>
</dbReference>
<dbReference type="GO" id="GO:0005525">
    <property type="term" value="F:GTP binding"/>
    <property type="evidence" value="ECO:0007669"/>
    <property type="project" value="UniProtKB-UniRule"/>
</dbReference>
<dbReference type="GO" id="GO:0003924">
    <property type="term" value="F:GTPase activity"/>
    <property type="evidence" value="ECO:0007669"/>
    <property type="project" value="UniProtKB-UniRule"/>
</dbReference>
<dbReference type="GO" id="GO:0097216">
    <property type="term" value="F:guanosine tetraphosphate binding"/>
    <property type="evidence" value="ECO:0007669"/>
    <property type="project" value="UniProtKB-ARBA"/>
</dbReference>
<dbReference type="GO" id="GO:0043022">
    <property type="term" value="F:ribosome binding"/>
    <property type="evidence" value="ECO:0007669"/>
    <property type="project" value="UniProtKB-UniRule"/>
</dbReference>
<dbReference type="GO" id="GO:0003746">
    <property type="term" value="F:translation elongation factor activity"/>
    <property type="evidence" value="ECO:0007669"/>
    <property type="project" value="UniProtKB-UniRule"/>
</dbReference>
<dbReference type="GO" id="GO:0045727">
    <property type="term" value="P:positive regulation of translation"/>
    <property type="evidence" value="ECO:0007669"/>
    <property type="project" value="UniProtKB-UniRule"/>
</dbReference>
<dbReference type="CDD" id="cd03699">
    <property type="entry name" value="EF4_II"/>
    <property type="match status" value="1"/>
</dbReference>
<dbReference type="CDD" id="cd16260">
    <property type="entry name" value="EF4_III"/>
    <property type="match status" value="1"/>
</dbReference>
<dbReference type="CDD" id="cd01890">
    <property type="entry name" value="LepA"/>
    <property type="match status" value="1"/>
</dbReference>
<dbReference type="CDD" id="cd03709">
    <property type="entry name" value="lepA_C"/>
    <property type="match status" value="1"/>
</dbReference>
<dbReference type="FunFam" id="3.40.50.300:FF:000078">
    <property type="entry name" value="Elongation factor 4"/>
    <property type="match status" value="1"/>
</dbReference>
<dbReference type="FunFam" id="2.40.30.10:FF:000015">
    <property type="entry name" value="Translation factor GUF1, mitochondrial"/>
    <property type="match status" value="1"/>
</dbReference>
<dbReference type="FunFam" id="3.30.70.240:FF:000007">
    <property type="entry name" value="Translation factor GUF1, mitochondrial"/>
    <property type="match status" value="1"/>
</dbReference>
<dbReference type="FunFam" id="3.30.70.2570:FF:000001">
    <property type="entry name" value="Translation factor GUF1, mitochondrial"/>
    <property type="match status" value="1"/>
</dbReference>
<dbReference type="FunFam" id="3.30.70.870:FF:000004">
    <property type="entry name" value="Translation factor GUF1, mitochondrial"/>
    <property type="match status" value="1"/>
</dbReference>
<dbReference type="Gene3D" id="3.30.70.240">
    <property type="match status" value="1"/>
</dbReference>
<dbReference type="Gene3D" id="3.30.70.2570">
    <property type="entry name" value="Elongation factor 4, C-terminal domain"/>
    <property type="match status" value="1"/>
</dbReference>
<dbReference type="Gene3D" id="3.30.70.870">
    <property type="entry name" value="Elongation Factor G (Translational Gtpase), domain 3"/>
    <property type="match status" value="1"/>
</dbReference>
<dbReference type="Gene3D" id="3.40.50.300">
    <property type="entry name" value="P-loop containing nucleotide triphosphate hydrolases"/>
    <property type="match status" value="1"/>
</dbReference>
<dbReference type="Gene3D" id="2.40.30.10">
    <property type="entry name" value="Translation factors"/>
    <property type="match status" value="1"/>
</dbReference>
<dbReference type="HAMAP" id="MF_00071">
    <property type="entry name" value="LepA"/>
    <property type="match status" value="1"/>
</dbReference>
<dbReference type="InterPro" id="IPR006297">
    <property type="entry name" value="EF-4"/>
</dbReference>
<dbReference type="InterPro" id="IPR035647">
    <property type="entry name" value="EFG_III/V"/>
</dbReference>
<dbReference type="InterPro" id="IPR000640">
    <property type="entry name" value="EFG_V-like"/>
</dbReference>
<dbReference type="InterPro" id="IPR004161">
    <property type="entry name" value="EFTu-like_2"/>
</dbReference>
<dbReference type="InterPro" id="IPR031157">
    <property type="entry name" value="G_TR_CS"/>
</dbReference>
<dbReference type="InterPro" id="IPR038363">
    <property type="entry name" value="LepA_C_sf"/>
</dbReference>
<dbReference type="InterPro" id="IPR013842">
    <property type="entry name" value="LepA_CTD"/>
</dbReference>
<dbReference type="InterPro" id="IPR035654">
    <property type="entry name" value="LepA_IV"/>
</dbReference>
<dbReference type="InterPro" id="IPR027417">
    <property type="entry name" value="P-loop_NTPase"/>
</dbReference>
<dbReference type="InterPro" id="IPR005225">
    <property type="entry name" value="Small_GTP-bd"/>
</dbReference>
<dbReference type="InterPro" id="IPR000795">
    <property type="entry name" value="T_Tr_GTP-bd_dom"/>
</dbReference>
<dbReference type="NCBIfam" id="TIGR01393">
    <property type="entry name" value="lepA"/>
    <property type="match status" value="1"/>
</dbReference>
<dbReference type="NCBIfam" id="TIGR00231">
    <property type="entry name" value="small_GTP"/>
    <property type="match status" value="1"/>
</dbReference>
<dbReference type="PANTHER" id="PTHR43512:SF4">
    <property type="entry name" value="TRANSLATION FACTOR GUF1 HOMOLOG, CHLOROPLASTIC"/>
    <property type="match status" value="1"/>
</dbReference>
<dbReference type="PANTHER" id="PTHR43512">
    <property type="entry name" value="TRANSLATION FACTOR GUF1-RELATED"/>
    <property type="match status" value="1"/>
</dbReference>
<dbReference type="Pfam" id="PF00679">
    <property type="entry name" value="EFG_C"/>
    <property type="match status" value="1"/>
</dbReference>
<dbReference type="Pfam" id="PF00009">
    <property type="entry name" value="GTP_EFTU"/>
    <property type="match status" value="1"/>
</dbReference>
<dbReference type="Pfam" id="PF03144">
    <property type="entry name" value="GTP_EFTU_D2"/>
    <property type="match status" value="1"/>
</dbReference>
<dbReference type="Pfam" id="PF06421">
    <property type="entry name" value="LepA_C"/>
    <property type="match status" value="1"/>
</dbReference>
<dbReference type="PRINTS" id="PR00315">
    <property type="entry name" value="ELONGATNFCT"/>
</dbReference>
<dbReference type="SMART" id="SM00838">
    <property type="entry name" value="EFG_C"/>
    <property type="match status" value="1"/>
</dbReference>
<dbReference type="SUPFAM" id="SSF54980">
    <property type="entry name" value="EF-G C-terminal domain-like"/>
    <property type="match status" value="2"/>
</dbReference>
<dbReference type="SUPFAM" id="SSF52540">
    <property type="entry name" value="P-loop containing nucleoside triphosphate hydrolases"/>
    <property type="match status" value="1"/>
</dbReference>
<dbReference type="PROSITE" id="PS00301">
    <property type="entry name" value="G_TR_1"/>
    <property type="match status" value="1"/>
</dbReference>
<dbReference type="PROSITE" id="PS51722">
    <property type="entry name" value="G_TR_2"/>
    <property type="match status" value="1"/>
</dbReference>
<sequence length="602" mass="67083">MPRMTQLDLIRNFSIVAHIDHGKSTLADRLIQLTGTVAERDMKAQILDSMEIERERGITIKANTVRIDYPAKDGRTYVLNLIDTPGHVDFAYEVSRSMRAVEGSLLVVDASQGVEAQTLANVYQALDAGHEIVPVLNKIDLPAAEPERVKSQIEDVIGLDASDAVLISAKSGLGIPDVLEAIVHRLPPPKGDREAPLKAMLVDSWYDAYLGVVVMIRVMDGVIRKGDRVKMMQTGAVYGIDRLAVLKPQMVDIAELGPGEIGVLTASIKQVRDTRVGDTITHEKKGCAAPLPGFKPAQPVVFCGLFPVDANDFEALREAIEKLALNDASFTYEMETSAALGFGFRCGFLGLLHLEVVRDRLEREYDLDLITTAPSVVYQIYMKDGTLQELHNPTDMPDLTYVDHIEEPRIRATIMVPDEYLGDVLKLCQDRRGIQLDLSYAGARAMVVYDLPLNEVVFDFYDRLKSVTKGYASFDYQITGYREDFLVKMSILVNDEPVDALSMMVHRDRADMRGRAMVEKLKELIPRHMFKIPIQAAIGGRVIARETISAMRKDVTAKCYGGDATRKRKLLDKQKAGKKKMRQFGKVEIPQQAFINALKMDS</sequence>
<gene>
    <name evidence="1" type="primary">lepA</name>
    <name type="ordered locus">Rsph17029_0764</name>
</gene>
<accession>A3PHQ9</accession>
<comment type="function">
    <text evidence="1">Required for accurate and efficient protein synthesis under certain stress conditions. May act as a fidelity factor of the translation reaction, by catalyzing a one-codon backward translocation of tRNAs on improperly translocated ribosomes. Back-translocation proceeds from a post-translocation (POST) complex to a pre-translocation (PRE) complex, thus giving elongation factor G a second chance to translocate the tRNAs correctly. Binds to ribosomes in a GTP-dependent manner.</text>
</comment>
<comment type="catalytic activity">
    <reaction evidence="1">
        <text>GTP + H2O = GDP + phosphate + H(+)</text>
        <dbReference type="Rhea" id="RHEA:19669"/>
        <dbReference type="ChEBI" id="CHEBI:15377"/>
        <dbReference type="ChEBI" id="CHEBI:15378"/>
        <dbReference type="ChEBI" id="CHEBI:37565"/>
        <dbReference type="ChEBI" id="CHEBI:43474"/>
        <dbReference type="ChEBI" id="CHEBI:58189"/>
        <dbReference type="EC" id="3.6.5.n1"/>
    </reaction>
</comment>
<comment type="subcellular location">
    <subcellularLocation>
        <location evidence="1">Cell inner membrane</location>
        <topology evidence="1">Peripheral membrane protein</topology>
        <orientation evidence="1">Cytoplasmic side</orientation>
    </subcellularLocation>
</comment>
<comment type="similarity">
    <text evidence="1">Belongs to the TRAFAC class translation factor GTPase superfamily. Classic translation factor GTPase family. LepA subfamily.</text>
</comment>
<protein>
    <recommendedName>
        <fullName evidence="1">Elongation factor 4</fullName>
        <shortName evidence="1">EF-4</shortName>
        <ecNumber evidence="1">3.6.5.n1</ecNumber>
    </recommendedName>
    <alternativeName>
        <fullName evidence="1">Ribosomal back-translocase LepA</fullName>
    </alternativeName>
</protein>
<reference key="1">
    <citation type="submission" date="2007-02" db="EMBL/GenBank/DDBJ databases">
        <title>Complete sequence of chromosome 1 of Rhodobacter sphaeroides ATCC 17029.</title>
        <authorList>
            <person name="Copeland A."/>
            <person name="Lucas S."/>
            <person name="Lapidus A."/>
            <person name="Barry K."/>
            <person name="Detter J.C."/>
            <person name="Glavina del Rio T."/>
            <person name="Hammon N."/>
            <person name="Israni S."/>
            <person name="Dalin E."/>
            <person name="Tice H."/>
            <person name="Pitluck S."/>
            <person name="Kiss H."/>
            <person name="Brettin T."/>
            <person name="Bruce D."/>
            <person name="Han C."/>
            <person name="Tapia R."/>
            <person name="Gilna P."/>
            <person name="Schmutz J."/>
            <person name="Larimer F."/>
            <person name="Land M."/>
            <person name="Hauser L."/>
            <person name="Kyrpides N."/>
            <person name="Mikhailova N."/>
            <person name="Richardson P."/>
            <person name="Mackenzie C."/>
            <person name="Choudhary M."/>
            <person name="Donohue T.J."/>
            <person name="Kaplan S."/>
        </authorList>
    </citation>
    <scope>NUCLEOTIDE SEQUENCE [LARGE SCALE GENOMIC DNA]</scope>
    <source>
        <strain>ATCC 17029 / ATH 2.4.9</strain>
    </source>
</reference>
<keyword id="KW-0997">Cell inner membrane</keyword>
<keyword id="KW-1003">Cell membrane</keyword>
<keyword id="KW-0342">GTP-binding</keyword>
<keyword id="KW-0378">Hydrolase</keyword>
<keyword id="KW-0472">Membrane</keyword>
<keyword id="KW-0547">Nucleotide-binding</keyword>
<keyword id="KW-0648">Protein biosynthesis</keyword>
<name>LEPA_CERS1</name>